<name>BAP31_PONAB</name>
<evidence type="ECO:0000250" key="1"/>
<evidence type="ECO:0000250" key="2">
    <source>
        <dbReference type="UniProtKB" id="P51572"/>
    </source>
</evidence>
<evidence type="ECO:0000250" key="3">
    <source>
        <dbReference type="UniProtKB" id="Q61335"/>
    </source>
</evidence>
<evidence type="ECO:0000255" key="4"/>
<evidence type="ECO:0000305" key="5"/>
<feature type="chain" id="PRO_0000142893" description="B-cell receptor-associated protein 31">
    <location>
        <begin position="1"/>
        <end position="246"/>
    </location>
</feature>
<feature type="topological domain" description="Lumenal" evidence="4">
    <location>
        <begin position="1"/>
        <end position="6"/>
    </location>
</feature>
<feature type="transmembrane region" description="Helical" evidence="4">
    <location>
        <begin position="7"/>
        <end position="27"/>
    </location>
</feature>
<feature type="topological domain" description="Cytoplasmic" evidence="4">
    <location>
        <begin position="28"/>
        <end position="43"/>
    </location>
</feature>
<feature type="transmembrane region" description="Helical" evidence="4">
    <location>
        <begin position="44"/>
        <end position="64"/>
    </location>
</feature>
<feature type="topological domain" description="Lumenal" evidence="4">
    <location>
        <begin position="65"/>
        <end position="102"/>
    </location>
</feature>
<feature type="transmembrane region" description="Helical" evidence="4">
    <location>
        <begin position="103"/>
        <end position="123"/>
    </location>
</feature>
<feature type="topological domain" description="Cytoplasmic" evidence="4">
    <location>
        <begin position="124"/>
        <end position="246"/>
    </location>
</feature>
<feature type="coiled-coil region" evidence="1">
    <location>
        <begin position="165"/>
        <end position="237"/>
    </location>
</feature>
<feature type="short sequence motif" description="Di-lysine motif">
    <location>
        <begin position="243"/>
        <end position="246"/>
    </location>
</feature>
<feature type="site" description="Cleavage; by caspase-8" evidence="4">
    <location>
        <begin position="164"/>
        <end position="165"/>
    </location>
</feature>
<feature type="site" description="Cleavage; by caspase-8" evidence="4">
    <location>
        <begin position="238"/>
        <end position="239"/>
    </location>
</feature>
<reference key="1">
    <citation type="submission" date="2004-11" db="EMBL/GenBank/DDBJ databases">
        <authorList>
            <consortium name="The German cDNA consortium"/>
        </authorList>
    </citation>
    <scope>NUCLEOTIDE SEQUENCE [LARGE SCALE MRNA]</scope>
    <source>
        <tissue>Kidney</tissue>
    </source>
</reference>
<dbReference type="EMBL" id="CR859779">
    <property type="protein sequence ID" value="CAH91937.1"/>
    <property type="molecule type" value="mRNA"/>
</dbReference>
<dbReference type="RefSeq" id="NP_001126123.1">
    <property type="nucleotide sequence ID" value="NM_001132651.1"/>
</dbReference>
<dbReference type="SMR" id="Q5R8H3"/>
<dbReference type="FunCoup" id="Q5R8H3">
    <property type="interactions" value="2296"/>
</dbReference>
<dbReference type="STRING" id="9601.ENSPPYP00000023334"/>
<dbReference type="Ensembl" id="ENSPPYT00000024311.3">
    <property type="protein sequence ID" value="ENSPPYP00000023334.3"/>
    <property type="gene ID" value="ENSPPYG00000020850.3"/>
</dbReference>
<dbReference type="GeneID" id="100173079"/>
<dbReference type="KEGG" id="pon:100173079"/>
<dbReference type="CTD" id="10134"/>
<dbReference type="GeneTree" id="ENSGT00390000011863"/>
<dbReference type="InParanoid" id="Q5R8H3"/>
<dbReference type="OMA" id="CEGQKDK"/>
<dbReference type="OrthoDB" id="435607at2759"/>
<dbReference type="Proteomes" id="UP000001595">
    <property type="component" value="Chromosome X"/>
</dbReference>
<dbReference type="GO" id="GO:0005789">
    <property type="term" value="C:endoplasmic reticulum membrane"/>
    <property type="evidence" value="ECO:0007669"/>
    <property type="project" value="UniProtKB-SubCell"/>
</dbReference>
<dbReference type="GO" id="GO:0033116">
    <property type="term" value="C:endoplasmic reticulum-Golgi intermediate compartment membrane"/>
    <property type="evidence" value="ECO:0007669"/>
    <property type="project" value="UniProtKB-SubCell"/>
</dbReference>
<dbReference type="GO" id="GO:0006915">
    <property type="term" value="P:apoptotic process"/>
    <property type="evidence" value="ECO:0007669"/>
    <property type="project" value="UniProtKB-KW"/>
</dbReference>
<dbReference type="GO" id="GO:0006888">
    <property type="term" value="P:endoplasmic reticulum to Golgi vesicle-mediated transport"/>
    <property type="evidence" value="ECO:0007669"/>
    <property type="project" value="TreeGrafter"/>
</dbReference>
<dbReference type="GO" id="GO:0006886">
    <property type="term" value="P:intracellular protein transport"/>
    <property type="evidence" value="ECO:0007669"/>
    <property type="project" value="InterPro"/>
</dbReference>
<dbReference type="GO" id="GO:0070973">
    <property type="term" value="P:protein localization to endoplasmic reticulum exit site"/>
    <property type="evidence" value="ECO:0007669"/>
    <property type="project" value="TreeGrafter"/>
</dbReference>
<dbReference type="FunFam" id="1.20.5.110:FF:000011">
    <property type="entry name" value="B-cell receptor-associated protein 29"/>
    <property type="match status" value="1"/>
</dbReference>
<dbReference type="Gene3D" id="1.20.5.110">
    <property type="match status" value="1"/>
</dbReference>
<dbReference type="InterPro" id="IPR008417">
    <property type="entry name" value="BAP29/BAP31"/>
</dbReference>
<dbReference type="InterPro" id="IPR040463">
    <property type="entry name" value="BAP29/BAP31_N"/>
</dbReference>
<dbReference type="InterPro" id="IPR041672">
    <property type="entry name" value="Bap31/Bap29_C"/>
</dbReference>
<dbReference type="PANTHER" id="PTHR12701:SF15">
    <property type="entry name" value="B-CELL RECEPTOR-ASSOCIATED PROTEIN 31"/>
    <property type="match status" value="1"/>
</dbReference>
<dbReference type="PANTHER" id="PTHR12701">
    <property type="entry name" value="BCR-ASSOCIATED PROTEIN, BAP"/>
    <property type="match status" value="1"/>
</dbReference>
<dbReference type="Pfam" id="PF05529">
    <property type="entry name" value="Bap31"/>
    <property type="match status" value="1"/>
</dbReference>
<dbReference type="Pfam" id="PF18035">
    <property type="entry name" value="Bap31_Bap29_C"/>
    <property type="match status" value="1"/>
</dbReference>
<organism>
    <name type="scientific">Pongo abelii</name>
    <name type="common">Sumatran orangutan</name>
    <name type="synonym">Pongo pygmaeus abelii</name>
    <dbReference type="NCBI Taxonomy" id="9601"/>
    <lineage>
        <taxon>Eukaryota</taxon>
        <taxon>Metazoa</taxon>
        <taxon>Chordata</taxon>
        <taxon>Craniata</taxon>
        <taxon>Vertebrata</taxon>
        <taxon>Euteleostomi</taxon>
        <taxon>Mammalia</taxon>
        <taxon>Eutheria</taxon>
        <taxon>Euarchontoglires</taxon>
        <taxon>Primates</taxon>
        <taxon>Haplorrhini</taxon>
        <taxon>Catarrhini</taxon>
        <taxon>Hominidae</taxon>
        <taxon>Pongo</taxon>
    </lineage>
</organism>
<protein>
    <recommendedName>
        <fullName>B-cell receptor-associated protein 31</fullName>
        <shortName>BCR-associated protein 31</shortName>
        <shortName>Bap31</shortName>
    </recommendedName>
</protein>
<comment type="function">
    <text evidence="2 3">Functions as a chaperone protein. Is one of the most abundant endoplasmic reticulum (ER) proteins. Plays a role in the export of secreted proteins in the ER, the recognition of abnormally folded protein and their targeting to the ER associated-degradation (ERAD) (By similarity). Also serves as a cargo receptor for the export of transmembrane proteins (By similarity). Plays a role in the assembly of the mitochondrial membrane respiratory chain NADH dehydrogenase (Complex I) by stimulating the translocation of NDUFS4 and NDUFB11 from the cytosol to the mitochondria via interaction with TOMM40. In response to ER stress, delocalizes from the ER-mitochondria contact sites and binds BCL2. May be involved in CASP8-mediated apoptosis (By similarity).</text>
</comment>
<comment type="subunit">
    <text evidence="2 3">Homodimer and heterodimer with BCAP29 (By similarity). Binds CASP8 (isoform 9) as a complex containing BCAP31, BCAP29, BCL2 and/or BCL2L1 (By similarity). Forms a complex (via C-terminus) with TOMM40 which mediates the translocation of components of the mitochondrial membrane respiratory chain NADH dehydrogenase (Complex I) from the cytosol to the mitochondria; within the complex BCAP31 interacts directly with unprocessed and processed NDUFS4 and NDUFB11. Interacts with VDAC1 (By similarity). Interacts with VAMP3, VAMP1 and membrane IgD immunoglobulins (By similarity). Interacts with HACD2 (By similarity). Interacts with DNM1L; may form part of a larger protein complex at the endoplasmic reticulum-mitochondrial interface during mitochondrial fission (By similarity).</text>
</comment>
<comment type="subcellular location">
    <subcellularLocation>
        <location evidence="2">Endoplasmic reticulum membrane</location>
        <topology evidence="4">Multi-pass membrane protein</topology>
    </subcellularLocation>
    <subcellularLocation>
        <location evidence="2">Endoplasmic reticulum-Golgi intermediate compartment membrane</location>
        <topology evidence="4">Multi-pass membrane protein</topology>
    </subcellularLocation>
    <text evidence="2">May shuttle between the ER and the intermediate compartment/cis-Golgi complex. Associates with the mitochondria-associated endoplasmic reticulum membrane via interaction with TOMM40.</text>
</comment>
<comment type="PTM">
    <text evidence="1">Cleaved by CASP8 and other caspases.</text>
</comment>
<comment type="similarity">
    <text evidence="5">Belongs to the BCAP29/BCAP31 family.</text>
</comment>
<sequence length="246" mass="27947">MSLQWTAVATFLYAEVFVVLLLCIPFISPKRWQKIFKSRLVELVVSYGNTFFVVLIVILVLLVIDAVREIRKYDDVTEKVNLQNNPGAMEHFHMKLFRAQRNLYIAGFSLLLSFLLRRLVTLISQQATLLASNEAFKKQAESASEAAKKYMEENDQLKKGAAVDGGKLDVGNAEVKLEEENRSLKADLQKLKDELASTKQKLEKAENQVLAMRKQSEGLTKEYDRLLEEHAKLQAAVDGPTDKKEE</sequence>
<gene>
    <name type="primary">BCAP31</name>
</gene>
<proteinExistence type="evidence at transcript level"/>
<accession>Q5R8H3</accession>
<keyword id="KW-0053">Apoptosis</keyword>
<keyword id="KW-0175">Coiled coil</keyword>
<keyword id="KW-0256">Endoplasmic reticulum</keyword>
<keyword id="KW-0931">ER-Golgi transport</keyword>
<keyword id="KW-0472">Membrane</keyword>
<keyword id="KW-0653">Protein transport</keyword>
<keyword id="KW-1185">Reference proteome</keyword>
<keyword id="KW-0812">Transmembrane</keyword>
<keyword id="KW-1133">Transmembrane helix</keyword>
<keyword id="KW-0813">Transport</keyword>